<keyword id="KW-0687">Ribonucleoprotein</keyword>
<keyword id="KW-0689">Ribosomal protein</keyword>
<keyword id="KW-0694">RNA-binding</keyword>
<keyword id="KW-0699">rRNA-binding</keyword>
<evidence type="ECO:0000255" key="1">
    <source>
        <dbReference type="HAMAP-Rule" id="MF_01328"/>
    </source>
</evidence>
<evidence type="ECO:0000256" key="2">
    <source>
        <dbReference type="SAM" id="MobiDB-lite"/>
    </source>
</evidence>
<evidence type="ECO:0000305" key="3"/>
<protein>
    <recommendedName>
        <fullName evidence="1">Large ribosomal subunit protein uL4</fullName>
    </recommendedName>
    <alternativeName>
        <fullName evidence="3">50S ribosomal protein L4</fullName>
    </alternativeName>
</protein>
<dbReference type="EMBL" id="CP000359">
    <property type="protein sequence ID" value="ABF46161.1"/>
    <property type="molecule type" value="Genomic_DNA"/>
</dbReference>
<dbReference type="RefSeq" id="WP_011530991.1">
    <property type="nucleotide sequence ID" value="NC_008025.1"/>
</dbReference>
<dbReference type="SMR" id="Q1IX73"/>
<dbReference type="STRING" id="319795.Dgeo_1866"/>
<dbReference type="KEGG" id="dge:Dgeo_1866"/>
<dbReference type="eggNOG" id="COG0088">
    <property type="taxonomic scope" value="Bacteria"/>
</dbReference>
<dbReference type="HOGENOM" id="CLU_041575_5_1_0"/>
<dbReference type="Proteomes" id="UP000002431">
    <property type="component" value="Chromosome"/>
</dbReference>
<dbReference type="GO" id="GO:1990904">
    <property type="term" value="C:ribonucleoprotein complex"/>
    <property type="evidence" value="ECO:0007669"/>
    <property type="project" value="UniProtKB-KW"/>
</dbReference>
<dbReference type="GO" id="GO:0005840">
    <property type="term" value="C:ribosome"/>
    <property type="evidence" value="ECO:0007669"/>
    <property type="project" value="UniProtKB-KW"/>
</dbReference>
<dbReference type="GO" id="GO:0019843">
    <property type="term" value="F:rRNA binding"/>
    <property type="evidence" value="ECO:0007669"/>
    <property type="project" value="UniProtKB-UniRule"/>
</dbReference>
<dbReference type="GO" id="GO:0003735">
    <property type="term" value="F:structural constituent of ribosome"/>
    <property type="evidence" value="ECO:0007669"/>
    <property type="project" value="InterPro"/>
</dbReference>
<dbReference type="GO" id="GO:0006412">
    <property type="term" value="P:translation"/>
    <property type="evidence" value="ECO:0007669"/>
    <property type="project" value="UniProtKB-UniRule"/>
</dbReference>
<dbReference type="Gene3D" id="3.40.1370.10">
    <property type="match status" value="1"/>
</dbReference>
<dbReference type="HAMAP" id="MF_01328_B">
    <property type="entry name" value="Ribosomal_uL4_B"/>
    <property type="match status" value="1"/>
</dbReference>
<dbReference type="InterPro" id="IPR002136">
    <property type="entry name" value="Ribosomal_uL4"/>
</dbReference>
<dbReference type="InterPro" id="IPR013005">
    <property type="entry name" value="Ribosomal_uL4-like"/>
</dbReference>
<dbReference type="InterPro" id="IPR023574">
    <property type="entry name" value="Ribosomal_uL4_dom_sf"/>
</dbReference>
<dbReference type="NCBIfam" id="TIGR03953">
    <property type="entry name" value="rplD_bact"/>
    <property type="match status" value="1"/>
</dbReference>
<dbReference type="PANTHER" id="PTHR10746">
    <property type="entry name" value="50S RIBOSOMAL PROTEIN L4"/>
    <property type="match status" value="1"/>
</dbReference>
<dbReference type="PANTHER" id="PTHR10746:SF6">
    <property type="entry name" value="LARGE RIBOSOMAL SUBUNIT PROTEIN UL4M"/>
    <property type="match status" value="1"/>
</dbReference>
<dbReference type="Pfam" id="PF00573">
    <property type="entry name" value="Ribosomal_L4"/>
    <property type="match status" value="1"/>
</dbReference>
<dbReference type="SUPFAM" id="SSF52166">
    <property type="entry name" value="Ribosomal protein L4"/>
    <property type="match status" value="1"/>
</dbReference>
<reference key="1">
    <citation type="submission" date="2006-04" db="EMBL/GenBank/DDBJ databases">
        <title>Complete sequence of chromosome of Deinococcus geothermalis DSM 11300.</title>
        <authorList>
            <person name="Copeland A."/>
            <person name="Lucas S."/>
            <person name="Lapidus A."/>
            <person name="Barry K."/>
            <person name="Detter J.C."/>
            <person name="Glavina del Rio T."/>
            <person name="Hammon N."/>
            <person name="Israni S."/>
            <person name="Dalin E."/>
            <person name="Tice H."/>
            <person name="Pitluck S."/>
            <person name="Brettin T."/>
            <person name="Bruce D."/>
            <person name="Han C."/>
            <person name="Tapia R."/>
            <person name="Saunders E."/>
            <person name="Gilna P."/>
            <person name="Schmutz J."/>
            <person name="Larimer F."/>
            <person name="Land M."/>
            <person name="Hauser L."/>
            <person name="Kyrpides N."/>
            <person name="Kim E."/>
            <person name="Daly M.J."/>
            <person name="Fredrickson J.K."/>
            <person name="Makarova K.S."/>
            <person name="Gaidamakova E.K."/>
            <person name="Zhai M."/>
            <person name="Richardson P."/>
        </authorList>
    </citation>
    <scope>NUCLEOTIDE SEQUENCE [LARGE SCALE GENOMIC DNA]</scope>
    <source>
        <strain>DSM 11300 / CIP 105573 / AG-3a</strain>
    </source>
</reference>
<sequence>MAQINVIGQNGGRSIDLDLPEVNPHVLHEVVTWQLAGRRRGTASTKTRAEVSRSGKKMYSQKGTGNARHGDRSVPTFVGGGVAFGPKPRSYSYTLPRKVRQLGLAMALADRQQQGKLTAVDGFGLDGKTKSFVSWAKENGLDGSERVLIVTDDELTRRAARNVAWATVLPVAGLNVYDILRHERLVIDAVALEPAQELETVPAEGNVQEGAAL</sequence>
<comment type="function">
    <text evidence="1">One of the primary rRNA binding proteins, this protein initially binds near the 5'-end of the 23S rRNA. It is important during the early stages of 50S assembly. It makes multiple contacts with different domains of the 23S rRNA in the assembled 50S subunit and ribosome.</text>
</comment>
<comment type="function">
    <text evidence="1">Forms part of the polypeptide exit tunnel.</text>
</comment>
<comment type="subunit">
    <text evidence="1">Part of the 50S ribosomal subunit.</text>
</comment>
<comment type="similarity">
    <text evidence="1">Belongs to the universal ribosomal protein uL4 family.</text>
</comment>
<organism>
    <name type="scientific">Deinococcus geothermalis (strain DSM 11300 / CIP 105573 / AG-3a)</name>
    <dbReference type="NCBI Taxonomy" id="319795"/>
    <lineage>
        <taxon>Bacteria</taxon>
        <taxon>Thermotogati</taxon>
        <taxon>Deinococcota</taxon>
        <taxon>Deinococci</taxon>
        <taxon>Deinococcales</taxon>
        <taxon>Deinococcaceae</taxon>
        <taxon>Deinococcus</taxon>
    </lineage>
</organism>
<name>RL4_DEIGD</name>
<accession>Q1IX73</accession>
<proteinExistence type="inferred from homology"/>
<feature type="chain" id="PRO_1000052391" description="Large ribosomal subunit protein uL4">
    <location>
        <begin position="1"/>
        <end position="213"/>
    </location>
</feature>
<feature type="region of interest" description="Disordered" evidence="2">
    <location>
        <begin position="41"/>
        <end position="75"/>
    </location>
</feature>
<gene>
    <name evidence="1" type="primary">rplD</name>
    <name type="ordered locus">Dgeo_1866</name>
</gene>